<sequence>MKALTARQQEVFDLIRDHISQTGMPPTRAEIAQRLGFRSPNAAEEHLKALARKGVIEIVSGASRGIRLLQEEEEGLPLVGRVAAGEPLLAQQHIEGHYQVDPSLFKPNADFLLRVSGMSMKDIGIMDGDLLAVHKTQDVRNGQVVVARIDDEVTVKRLKKQGNKVELLPENSEFKPIVVDLRQQSFTIEGLAVGVIRNGDWL</sequence>
<comment type="function">
    <text evidence="1">Represses a number of genes involved in the response to DNA damage (SOS response), including recA and lexA. Binds to the 16 bp palindromic sequence 5'-CTGTATATATATACAG-3'. In the presence of single-stranded DNA, RecA interacts with LexA causing an autocatalytic cleavage which disrupts the DNA-binding part of LexA, leading to derepression of the SOS regulon and eventually DNA repair.</text>
</comment>
<comment type="catalytic activity">
    <reaction evidence="1">
        <text>Hydrolysis of Ala-|-Gly bond in repressor LexA.</text>
        <dbReference type="EC" id="3.4.21.88"/>
    </reaction>
</comment>
<comment type="subunit">
    <text evidence="1">Homodimer.</text>
</comment>
<comment type="similarity">
    <text evidence="1">Belongs to the peptidase S24 family.</text>
</comment>
<gene>
    <name evidence="1" type="primary">lexA</name>
    <name type="ordered locus">SbBS512_E4554</name>
</gene>
<protein>
    <recommendedName>
        <fullName evidence="1">LexA repressor</fullName>
        <ecNumber evidence="1">3.4.21.88</ecNumber>
    </recommendedName>
</protein>
<keyword id="KW-0068">Autocatalytic cleavage</keyword>
<keyword id="KW-0227">DNA damage</keyword>
<keyword id="KW-0234">DNA repair</keyword>
<keyword id="KW-0235">DNA replication</keyword>
<keyword id="KW-0238">DNA-binding</keyword>
<keyword id="KW-0378">Hydrolase</keyword>
<keyword id="KW-1185">Reference proteome</keyword>
<keyword id="KW-0678">Repressor</keyword>
<keyword id="KW-0742">SOS response</keyword>
<keyword id="KW-0804">Transcription</keyword>
<keyword id="KW-0805">Transcription regulation</keyword>
<organism>
    <name type="scientific">Shigella boydii serotype 18 (strain CDC 3083-94 / BS512)</name>
    <dbReference type="NCBI Taxonomy" id="344609"/>
    <lineage>
        <taxon>Bacteria</taxon>
        <taxon>Pseudomonadati</taxon>
        <taxon>Pseudomonadota</taxon>
        <taxon>Gammaproteobacteria</taxon>
        <taxon>Enterobacterales</taxon>
        <taxon>Enterobacteriaceae</taxon>
        <taxon>Shigella</taxon>
    </lineage>
</organism>
<feature type="chain" id="PRO_1000089599" description="LexA repressor">
    <location>
        <begin position="1"/>
        <end position="202"/>
    </location>
</feature>
<feature type="DNA-binding region" description="H-T-H motif" evidence="1">
    <location>
        <begin position="28"/>
        <end position="48"/>
    </location>
</feature>
<feature type="active site" description="For autocatalytic cleavage activity" evidence="1">
    <location>
        <position position="119"/>
    </location>
</feature>
<feature type="active site" description="For autocatalytic cleavage activity" evidence="1">
    <location>
        <position position="156"/>
    </location>
</feature>
<feature type="site" description="Cleavage; by autolysis" evidence="1">
    <location>
        <begin position="84"/>
        <end position="85"/>
    </location>
</feature>
<name>LEXA_SHIB3</name>
<accession>B2TX73</accession>
<proteinExistence type="inferred from homology"/>
<dbReference type="EC" id="3.4.21.88" evidence="1"/>
<dbReference type="EMBL" id="CP001063">
    <property type="protein sequence ID" value="ACD08930.1"/>
    <property type="molecule type" value="Genomic_DNA"/>
</dbReference>
<dbReference type="RefSeq" id="WP_000646078.1">
    <property type="nucleotide sequence ID" value="NC_010658.1"/>
</dbReference>
<dbReference type="SMR" id="B2TX73"/>
<dbReference type="STRING" id="344609.SbBS512_E4554"/>
<dbReference type="MEROPS" id="S24.001"/>
<dbReference type="GeneID" id="93777788"/>
<dbReference type="KEGG" id="sbc:SbBS512_E4554"/>
<dbReference type="HOGENOM" id="CLU_066192_45_3_6"/>
<dbReference type="Proteomes" id="UP000001030">
    <property type="component" value="Chromosome"/>
</dbReference>
<dbReference type="GO" id="GO:0003677">
    <property type="term" value="F:DNA binding"/>
    <property type="evidence" value="ECO:0007669"/>
    <property type="project" value="UniProtKB-UniRule"/>
</dbReference>
<dbReference type="GO" id="GO:0004252">
    <property type="term" value="F:serine-type endopeptidase activity"/>
    <property type="evidence" value="ECO:0007669"/>
    <property type="project" value="UniProtKB-UniRule"/>
</dbReference>
<dbReference type="GO" id="GO:0006281">
    <property type="term" value="P:DNA repair"/>
    <property type="evidence" value="ECO:0007669"/>
    <property type="project" value="UniProtKB-UniRule"/>
</dbReference>
<dbReference type="GO" id="GO:0006260">
    <property type="term" value="P:DNA replication"/>
    <property type="evidence" value="ECO:0007669"/>
    <property type="project" value="UniProtKB-UniRule"/>
</dbReference>
<dbReference type="GO" id="GO:0045892">
    <property type="term" value="P:negative regulation of DNA-templated transcription"/>
    <property type="evidence" value="ECO:0007669"/>
    <property type="project" value="UniProtKB-UniRule"/>
</dbReference>
<dbReference type="GO" id="GO:0006508">
    <property type="term" value="P:proteolysis"/>
    <property type="evidence" value="ECO:0007669"/>
    <property type="project" value="InterPro"/>
</dbReference>
<dbReference type="GO" id="GO:0009432">
    <property type="term" value="P:SOS response"/>
    <property type="evidence" value="ECO:0007669"/>
    <property type="project" value="UniProtKB-UniRule"/>
</dbReference>
<dbReference type="CDD" id="cd06529">
    <property type="entry name" value="S24_LexA-like"/>
    <property type="match status" value="1"/>
</dbReference>
<dbReference type="FunFam" id="1.10.10.10:FF:000009">
    <property type="entry name" value="LexA repressor"/>
    <property type="match status" value="1"/>
</dbReference>
<dbReference type="FunFam" id="2.10.109.10:FF:000001">
    <property type="entry name" value="LexA repressor"/>
    <property type="match status" value="1"/>
</dbReference>
<dbReference type="Gene3D" id="2.10.109.10">
    <property type="entry name" value="Umud Fragment, subunit A"/>
    <property type="match status" value="1"/>
</dbReference>
<dbReference type="Gene3D" id="1.10.10.10">
    <property type="entry name" value="Winged helix-like DNA-binding domain superfamily/Winged helix DNA-binding domain"/>
    <property type="match status" value="1"/>
</dbReference>
<dbReference type="HAMAP" id="MF_00015">
    <property type="entry name" value="LexA"/>
    <property type="match status" value="1"/>
</dbReference>
<dbReference type="InterPro" id="IPR006200">
    <property type="entry name" value="LexA"/>
</dbReference>
<dbReference type="InterPro" id="IPR039418">
    <property type="entry name" value="LexA-like"/>
</dbReference>
<dbReference type="InterPro" id="IPR036286">
    <property type="entry name" value="LexA/Signal_pep-like_sf"/>
</dbReference>
<dbReference type="InterPro" id="IPR006199">
    <property type="entry name" value="LexA_DNA-bd_dom"/>
</dbReference>
<dbReference type="InterPro" id="IPR050077">
    <property type="entry name" value="LexA_repressor"/>
</dbReference>
<dbReference type="InterPro" id="IPR006197">
    <property type="entry name" value="Peptidase_S24_LexA"/>
</dbReference>
<dbReference type="InterPro" id="IPR015927">
    <property type="entry name" value="Peptidase_S24_S26A/B/C"/>
</dbReference>
<dbReference type="InterPro" id="IPR036388">
    <property type="entry name" value="WH-like_DNA-bd_sf"/>
</dbReference>
<dbReference type="InterPro" id="IPR036390">
    <property type="entry name" value="WH_DNA-bd_sf"/>
</dbReference>
<dbReference type="NCBIfam" id="TIGR00498">
    <property type="entry name" value="lexA"/>
    <property type="match status" value="1"/>
</dbReference>
<dbReference type="PANTHER" id="PTHR33516">
    <property type="entry name" value="LEXA REPRESSOR"/>
    <property type="match status" value="1"/>
</dbReference>
<dbReference type="PANTHER" id="PTHR33516:SF2">
    <property type="entry name" value="LEXA REPRESSOR-RELATED"/>
    <property type="match status" value="1"/>
</dbReference>
<dbReference type="Pfam" id="PF01726">
    <property type="entry name" value="LexA_DNA_bind"/>
    <property type="match status" value="1"/>
</dbReference>
<dbReference type="Pfam" id="PF00717">
    <property type="entry name" value="Peptidase_S24"/>
    <property type="match status" value="1"/>
</dbReference>
<dbReference type="PRINTS" id="PR00726">
    <property type="entry name" value="LEXASERPTASE"/>
</dbReference>
<dbReference type="SUPFAM" id="SSF51306">
    <property type="entry name" value="LexA/Signal peptidase"/>
    <property type="match status" value="1"/>
</dbReference>
<dbReference type="SUPFAM" id="SSF46785">
    <property type="entry name" value="Winged helix' DNA-binding domain"/>
    <property type="match status" value="1"/>
</dbReference>
<evidence type="ECO:0000255" key="1">
    <source>
        <dbReference type="HAMAP-Rule" id="MF_00015"/>
    </source>
</evidence>
<reference key="1">
    <citation type="submission" date="2008-05" db="EMBL/GenBank/DDBJ databases">
        <title>Complete sequence of Shigella boydii serotype 18 strain BS512.</title>
        <authorList>
            <person name="Rasko D.A."/>
            <person name="Rosovitz M."/>
            <person name="Maurelli A.T."/>
            <person name="Myers G."/>
            <person name="Seshadri R."/>
            <person name="Cer R."/>
            <person name="Jiang L."/>
            <person name="Ravel J."/>
            <person name="Sebastian Y."/>
        </authorList>
    </citation>
    <scope>NUCLEOTIDE SEQUENCE [LARGE SCALE GENOMIC DNA]</scope>
    <source>
        <strain>CDC 3083-94 / BS512</strain>
    </source>
</reference>